<dbReference type="EC" id="2.1.1.199" evidence="1"/>
<dbReference type="EMBL" id="CP000768">
    <property type="protein sequence ID" value="ABS44791.1"/>
    <property type="molecule type" value="Genomic_DNA"/>
</dbReference>
<dbReference type="SMR" id="A7H4D2"/>
<dbReference type="KEGG" id="cjd:JJD26997_1313"/>
<dbReference type="HOGENOM" id="CLU_038422_3_0_7"/>
<dbReference type="Proteomes" id="UP000002302">
    <property type="component" value="Chromosome"/>
</dbReference>
<dbReference type="GO" id="GO:0005737">
    <property type="term" value="C:cytoplasm"/>
    <property type="evidence" value="ECO:0007669"/>
    <property type="project" value="UniProtKB-SubCell"/>
</dbReference>
<dbReference type="GO" id="GO:0071424">
    <property type="term" value="F:rRNA (cytosine-N4-)-methyltransferase activity"/>
    <property type="evidence" value="ECO:0007669"/>
    <property type="project" value="UniProtKB-UniRule"/>
</dbReference>
<dbReference type="GO" id="GO:0070475">
    <property type="term" value="P:rRNA base methylation"/>
    <property type="evidence" value="ECO:0007669"/>
    <property type="project" value="UniProtKB-UniRule"/>
</dbReference>
<dbReference type="Gene3D" id="1.10.150.170">
    <property type="entry name" value="Putative methyltransferase TM0872, insert domain"/>
    <property type="match status" value="1"/>
</dbReference>
<dbReference type="Gene3D" id="3.40.50.150">
    <property type="entry name" value="Vaccinia Virus protein VP39"/>
    <property type="match status" value="1"/>
</dbReference>
<dbReference type="HAMAP" id="MF_01007">
    <property type="entry name" value="16SrRNA_methyltr_H"/>
    <property type="match status" value="1"/>
</dbReference>
<dbReference type="InterPro" id="IPR002903">
    <property type="entry name" value="RsmH"/>
</dbReference>
<dbReference type="InterPro" id="IPR023397">
    <property type="entry name" value="SAM-dep_MeTrfase_MraW_recog"/>
</dbReference>
<dbReference type="InterPro" id="IPR029063">
    <property type="entry name" value="SAM-dependent_MTases_sf"/>
</dbReference>
<dbReference type="NCBIfam" id="TIGR00006">
    <property type="entry name" value="16S rRNA (cytosine(1402)-N(4))-methyltransferase RsmH"/>
    <property type="match status" value="1"/>
</dbReference>
<dbReference type="PANTHER" id="PTHR11265:SF0">
    <property type="entry name" value="12S RRNA N4-METHYLCYTIDINE METHYLTRANSFERASE"/>
    <property type="match status" value="1"/>
</dbReference>
<dbReference type="PANTHER" id="PTHR11265">
    <property type="entry name" value="S-ADENOSYL-METHYLTRANSFERASE MRAW"/>
    <property type="match status" value="1"/>
</dbReference>
<dbReference type="Pfam" id="PF01795">
    <property type="entry name" value="Methyltransf_5"/>
    <property type="match status" value="1"/>
</dbReference>
<dbReference type="PIRSF" id="PIRSF004486">
    <property type="entry name" value="MraW"/>
    <property type="match status" value="1"/>
</dbReference>
<dbReference type="SUPFAM" id="SSF81799">
    <property type="entry name" value="Putative methyltransferase TM0872, insert domain"/>
    <property type="match status" value="1"/>
</dbReference>
<dbReference type="SUPFAM" id="SSF53335">
    <property type="entry name" value="S-adenosyl-L-methionine-dependent methyltransferases"/>
    <property type="match status" value="1"/>
</dbReference>
<proteinExistence type="inferred from homology"/>
<feature type="chain" id="PRO_0000386787" description="Ribosomal RNA small subunit methyltransferase H">
    <location>
        <begin position="1"/>
        <end position="310"/>
    </location>
</feature>
<feature type="binding site" evidence="1">
    <location>
        <begin position="33"/>
        <end position="35"/>
    </location>
    <ligand>
        <name>S-adenosyl-L-methionine</name>
        <dbReference type="ChEBI" id="CHEBI:59789"/>
    </ligand>
</feature>
<feature type="binding site" evidence="1">
    <location>
        <position position="52"/>
    </location>
    <ligand>
        <name>S-adenosyl-L-methionine</name>
        <dbReference type="ChEBI" id="CHEBI:59789"/>
    </ligand>
</feature>
<feature type="binding site" evidence="1">
    <location>
        <position position="79"/>
    </location>
    <ligand>
        <name>S-adenosyl-L-methionine</name>
        <dbReference type="ChEBI" id="CHEBI:59789"/>
    </ligand>
</feature>
<feature type="binding site" evidence="1">
    <location>
        <position position="98"/>
    </location>
    <ligand>
        <name>S-adenosyl-L-methionine</name>
        <dbReference type="ChEBI" id="CHEBI:59789"/>
    </ligand>
</feature>
<feature type="binding site" evidence="1">
    <location>
        <position position="105"/>
    </location>
    <ligand>
        <name>S-adenosyl-L-methionine</name>
        <dbReference type="ChEBI" id="CHEBI:59789"/>
    </ligand>
</feature>
<sequence>MEIPHIPVLLNEVQEIFKNLKTGYFLDCTLGFGGHSETLLKNHPGLKFIACDQDQQALEFSKKRLKDFHNRITFIQSNFSEVLEKISHKEELRGILADIGVSSFQLDNNERGFSVNSDFLDMRMNQNSKISAYEVVNAYTKEQLTSIFKDYGELHDAHFIAEKICLERSKNLIKSAKELYQIIGKGKQNHRKISKATLAFQAIRIEVNQELKVLKDFLGYLENLKPKNCILAIISFHSLEDRIVKNFFKKWSKNCICDEKIMRCKCGNNHSLGQIITKKSISASKEELLKNSRSSCAKMRAFYFNNLDNK</sequence>
<reference key="1">
    <citation type="submission" date="2007-07" db="EMBL/GenBank/DDBJ databases">
        <title>Complete genome sequence of Campylobacter jejuni subsp doylei 269.97 isolated from human blood.</title>
        <authorList>
            <person name="Fouts D.E."/>
            <person name="Mongodin E.F."/>
            <person name="Puiu D."/>
            <person name="Sebastian Y."/>
            <person name="Miller W.G."/>
            <person name="Mandrell R.E."/>
            <person name="Lastovica A.J."/>
            <person name="Nelson K.E."/>
        </authorList>
    </citation>
    <scope>NUCLEOTIDE SEQUENCE [LARGE SCALE GENOMIC DNA]</scope>
    <source>
        <strain>ATCC BAA-1458 / RM4099 / 269.97</strain>
    </source>
</reference>
<gene>
    <name evidence="1" type="primary">rsmH</name>
    <name type="synonym">mraW</name>
    <name type="ordered locus">JJD26997_1313</name>
</gene>
<protein>
    <recommendedName>
        <fullName evidence="1">Ribosomal RNA small subunit methyltransferase H</fullName>
        <ecNumber evidence="1">2.1.1.199</ecNumber>
    </recommendedName>
    <alternativeName>
        <fullName evidence="1">16S rRNA m(4)C1402 methyltransferase</fullName>
    </alternativeName>
    <alternativeName>
        <fullName evidence="1">rRNA (cytosine-N(4)-)-methyltransferase RsmH</fullName>
    </alternativeName>
</protein>
<organism>
    <name type="scientific">Campylobacter jejuni subsp. doylei (strain ATCC BAA-1458 / RM4099 / 269.97)</name>
    <dbReference type="NCBI Taxonomy" id="360109"/>
    <lineage>
        <taxon>Bacteria</taxon>
        <taxon>Pseudomonadati</taxon>
        <taxon>Campylobacterota</taxon>
        <taxon>Epsilonproteobacteria</taxon>
        <taxon>Campylobacterales</taxon>
        <taxon>Campylobacteraceae</taxon>
        <taxon>Campylobacter</taxon>
    </lineage>
</organism>
<name>RSMH_CAMJD</name>
<accession>A7H4D2</accession>
<evidence type="ECO:0000255" key="1">
    <source>
        <dbReference type="HAMAP-Rule" id="MF_01007"/>
    </source>
</evidence>
<keyword id="KW-0963">Cytoplasm</keyword>
<keyword id="KW-0489">Methyltransferase</keyword>
<keyword id="KW-0698">rRNA processing</keyword>
<keyword id="KW-0949">S-adenosyl-L-methionine</keyword>
<keyword id="KW-0808">Transferase</keyword>
<comment type="function">
    <text evidence="1">Specifically methylates the N4 position of cytidine in position 1402 (C1402) of 16S rRNA.</text>
</comment>
<comment type="catalytic activity">
    <reaction evidence="1">
        <text>cytidine(1402) in 16S rRNA + S-adenosyl-L-methionine = N(4)-methylcytidine(1402) in 16S rRNA + S-adenosyl-L-homocysteine + H(+)</text>
        <dbReference type="Rhea" id="RHEA:42928"/>
        <dbReference type="Rhea" id="RHEA-COMP:10286"/>
        <dbReference type="Rhea" id="RHEA-COMP:10287"/>
        <dbReference type="ChEBI" id="CHEBI:15378"/>
        <dbReference type="ChEBI" id="CHEBI:57856"/>
        <dbReference type="ChEBI" id="CHEBI:59789"/>
        <dbReference type="ChEBI" id="CHEBI:74506"/>
        <dbReference type="ChEBI" id="CHEBI:82748"/>
        <dbReference type="EC" id="2.1.1.199"/>
    </reaction>
</comment>
<comment type="subcellular location">
    <subcellularLocation>
        <location evidence="1">Cytoplasm</location>
    </subcellularLocation>
</comment>
<comment type="similarity">
    <text evidence="1">Belongs to the methyltransferase superfamily. RsmH family.</text>
</comment>